<organism>
    <name type="scientific">Streptococcus pneumoniae (strain JJA)</name>
    <dbReference type="NCBI Taxonomy" id="488222"/>
    <lineage>
        <taxon>Bacteria</taxon>
        <taxon>Bacillati</taxon>
        <taxon>Bacillota</taxon>
        <taxon>Bacilli</taxon>
        <taxon>Lactobacillales</taxon>
        <taxon>Streptococcaceae</taxon>
        <taxon>Streptococcus</taxon>
    </lineage>
</organism>
<reference key="1">
    <citation type="journal article" date="2010" name="Genome Biol.">
        <title>Structure and dynamics of the pan-genome of Streptococcus pneumoniae and closely related species.</title>
        <authorList>
            <person name="Donati C."/>
            <person name="Hiller N.L."/>
            <person name="Tettelin H."/>
            <person name="Muzzi A."/>
            <person name="Croucher N.J."/>
            <person name="Angiuoli S.V."/>
            <person name="Oggioni M."/>
            <person name="Dunning Hotopp J.C."/>
            <person name="Hu F.Z."/>
            <person name="Riley D.R."/>
            <person name="Covacci A."/>
            <person name="Mitchell T.J."/>
            <person name="Bentley S.D."/>
            <person name="Kilian M."/>
            <person name="Ehrlich G.D."/>
            <person name="Rappuoli R."/>
            <person name="Moxon E.R."/>
            <person name="Masignani V."/>
        </authorList>
    </citation>
    <scope>NUCLEOTIDE SEQUENCE [LARGE SCALE GENOMIC DNA]</scope>
    <source>
        <strain>JJA</strain>
    </source>
</reference>
<accession>C1CFC0</accession>
<comment type="function">
    <text evidence="1">Binds as a heterodimer with protein bS6 to the central domain of the 16S rRNA, where it helps stabilize the platform of the 30S subunit.</text>
</comment>
<comment type="subunit">
    <text evidence="1">Part of the 30S ribosomal subunit. Forms a tight heterodimer with protein bS6.</text>
</comment>
<comment type="similarity">
    <text evidence="1">Belongs to the bacterial ribosomal protein bS18 family.</text>
</comment>
<name>RS18_STRZJ</name>
<evidence type="ECO:0000255" key="1">
    <source>
        <dbReference type="HAMAP-Rule" id="MF_00270"/>
    </source>
</evidence>
<evidence type="ECO:0000305" key="2"/>
<protein>
    <recommendedName>
        <fullName evidence="1">Small ribosomal subunit protein bS18</fullName>
    </recommendedName>
    <alternativeName>
        <fullName evidence="2">30S ribosomal protein S18</fullName>
    </alternativeName>
</protein>
<dbReference type="EMBL" id="CP000919">
    <property type="protein sequence ID" value="ACO19516.1"/>
    <property type="molecule type" value="Genomic_DNA"/>
</dbReference>
<dbReference type="RefSeq" id="WP_000068664.1">
    <property type="nucleotide sequence ID" value="NC_012466.1"/>
</dbReference>
<dbReference type="SMR" id="C1CFC0"/>
<dbReference type="GeneID" id="93963800"/>
<dbReference type="KEGG" id="sjj:SPJ_1443"/>
<dbReference type="HOGENOM" id="CLU_148710_2_2_9"/>
<dbReference type="Proteomes" id="UP000002206">
    <property type="component" value="Chromosome"/>
</dbReference>
<dbReference type="GO" id="GO:0022627">
    <property type="term" value="C:cytosolic small ribosomal subunit"/>
    <property type="evidence" value="ECO:0007669"/>
    <property type="project" value="TreeGrafter"/>
</dbReference>
<dbReference type="GO" id="GO:0070181">
    <property type="term" value="F:small ribosomal subunit rRNA binding"/>
    <property type="evidence" value="ECO:0007669"/>
    <property type="project" value="TreeGrafter"/>
</dbReference>
<dbReference type="GO" id="GO:0003735">
    <property type="term" value="F:structural constituent of ribosome"/>
    <property type="evidence" value="ECO:0007669"/>
    <property type="project" value="InterPro"/>
</dbReference>
<dbReference type="GO" id="GO:0006412">
    <property type="term" value="P:translation"/>
    <property type="evidence" value="ECO:0007669"/>
    <property type="project" value="UniProtKB-UniRule"/>
</dbReference>
<dbReference type="FunFam" id="4.10.640.10:FF:000003">
    <property type="entry name" value="30S ribosomal protein S18"/>
    <property type="match status" value="1"/>
</dbReference>
<dbReference type="Gene3D" id="4.10.640.10">
    <property type="entry name" value="Ribosomal protein S18"/>
    <property type="match status" value="1"/>
</dbReference>
<dbReference type="HAMAP" id="MF_00270">
    <property type="entry name" value="Ribosomal_bS18"/>
    <property type="match status" value="1"/>
</dbReference>
<dbReference type="InterPro" id="IPR001648">
    <property type="entry name" value="Ribosomal_bS18"/>
</dbReference>
<dbReference type="InterPro" id="IPR018275">
    <property type="entry name" value="Ribosomal_bS18_CS"/>
</dbReference>
<dbReference type="InterPro" id="IPR036870">
    <property type="entry name" value="Ribosomal_bS18_sf"/>
</dbReference>
<dbReference type="NCBIfam" id="TIGR00165">
    <property type="entry name" value="S18"/>
    <property type="match status" value="1"/>
</dbReference>
<dbReference type="PANTHER" id="PTHR13479">
    <property type="entry name" value="30S RIBOSOMAL PROTEIN S18"/>
    <property type="match status" value="1"/>
</dbReference>
<dbReference type="PANTHER" id="PTHR13479:SF40">
    <property type="entry name" value="SMALL RIBOSOMAL SUBUNIT PROTEIN BS18M"/>
    <property type="match status" value="1"/>
</dbReference>
<dbReference type="Pfam" id="PF01084">
    <property type="entry name" value="Ribosomal_S18"/>
    <property type="match status" value="1"/>
</dbReference>
<dbReference type="PRINTS" id="PR00974">
    <property type="entry name" value="RIBOSOMALS18"/>
</dbReference>
<dbReference type="SUPFAM" id="SSF46911">
    <property type="entry name" value="Ribosomal protein S18"/>
    <property type="match status" value="1"/>
</dbReference>
<dbReference type="PROSITE" id="PS00057">
    <property type="entry name" value="RIBOSOMAL_S18"/>
    <property type="match status" value="1"/>
</dbReference>
<feature type="chain" id="PRO_1000196533" description="Small ribosomal subunit protein bS18">
    <location>
        <begin position="1"/>
        <end position="79"/>
    </location>
</feature>
<sequence>MAQQRRGGFKRRKKVDYIAANKIEYVDYKDTELLSRFVSERGKILPRRVTGTSAKNQRKVTTAIKRARVMALMPFVNED</sequence>
<gene>
    <name evidence="1" type="primary">rpsR</name>
    <name type="ordered locus">SPJ_1443</name>
</gene>
<proteinExistence type="inferred from homology"/>
<keyword id="KW-0687">Ribonucleoprotein</keyword>
<keyword id="KW-0689">Ribosomal protein</keyword>
<keyword id="KW-0694">RNA-binding</keyword>
<keyword id="KW-0699">rRNA-binding</keyword>